<feature type="chain" id="PRO_0000243836" description="Small ribosomal subunit protein bS16">
    <location>
        <begin position="1"/>
        <end position="80"/>
    </location>
</feature>
<evidence type="ECO:0000255" key="1">
    <source>
        <dbReference type="HAMAP-Rule" id="MF_00385"/>
    </source>
</evidence>
<evidence type="ECO:0000305" key="2"/>
<dbReference type="EMBL" id="CP000127">
    <property type="protein sequence ID" value="ABA58718.1"/>
    <property type="molecule type" value="Genomic_DNA"/>
</dbReference>
<dbReference type="RefSeq" id="WP_002808978.1">
    <property type="nucleotide sequence ID" value="NC_007484.1"/>
</dbReference>
<dbReference type="SMR" id="Q3J8X8"/>
<dbReference type="FunCoup" id="Q3J8X8">
    <property type="interactions" value="589"/>
</dbReference>
<dbReference type="STRING" id="323261.Noc_2260"/>
<dbReference type="KEGG" id="noc:Noc_2260"/>
<dbReference type="eggNOG" id="COG0228">
    <property type="taxonomic scope" value="Bacteria"/>
</dbReference>
<dbReference type="HOGENOM" id="CLU_100590_5_1_6"/>
<dbReference type="InParanoid" id="Q3J8X8"/>
<dbReference type="Proteomes" id="UP000006838">
    <property type="component" value="Chromosome"/>
</dbReference>
<dbReference type="GO" id="GO:0005737">
    <property type="term" value="C:cytoplasm"/>
    <property type="evidence" value="ECO:0007669"/>
    <property type="project" value="UniProtKB-ARBA"/>
</dbReference>
<dbReference type="GO" id="GO:0015935">
    <property type="term" value="C:small ribosomal subunit"/>
    <property type="evidence" value="ECO:0007669"/>
    <property type="project" value="TreeGrafter"/>
</dbReference>
<dbReference type="GO" id="GO:0003735">
    <property type="term" value="F:structural constituent of ribosome"/>
    <property type="evidence" value="ECO:0007669"/>
    <property type="project" value="InterPro"/>
</dbReference>
<dbReference type="GO" id="GO:0006412">
    <property type="term" value="P:translation"/>
    <property type="evidence" value="ECO:0007669"/>
    <property type="project" value="UniProtKB-UniRule"/>
</dbReference>
<dbReference type="Gene3D" id="3.30.1320.10">
    <property type="match status" value="1"/>
</dbReference>
<dbReference type="HAMAP" id="MF_00385">
    <property type="entry name" value="Ribosomal_bS16"/>
    <property type="match status" value="1"/>
</dbReference>
<dbReference type="InterPro" id="IPR000307">
    <property type="entry name" value="Ribosomal_bS16"/>
</dbReference>
<dbReference type="InterPro" id="IPR020592">
    <property type="entry name" value="Ribosomal_bS16_CS"/>
</dbReference>
<dbReference type="InterPro" id="IPR023803">
    <property type="entry name" value="Ribosomal_bS16_dom_sf"/>
</dbReference>
<dbReference type="NCBIfam" id="TIGR00002">
    <property type="entry name" value="S16"/>
    <property type="match status" value="1"/>
</dbReference>
<dbReference type="PANTHER" id="PTHR12919">
    <property type="entry name" value="30S RIBOSOMAL PROTEIN S16"/>
    <property type="match status" value="1"/>
</dbReference>
<dbReference type="PANTHER" id="PTHR12919:SF20">
    <property type="entry name" value="SMALL RIBOSOMAL SUBUNIT PROTEIN BS16M"/>
    <property type="match status" value="1"/>
</dbReference>
<dbReference type="Pfam" id="PF00886">
    <property type="entry name" value="Ribosomal_S16"/>
    <property type="match status" value="1"/>
</dbReference>
<dbReference type="SUPFAM" id="SSF54565">
    <property type="entry name" value="Ribosomal protein S16"/>
    <property type="match status" value="1"/>
</dbReference>
<dbReference type="PROSITE" id="PS00732">
    <property type="entry name" value="RIBOSOMAL_S16"/>
    <property type="match status" value="1"/>
</dbReference>
<gene>
    <name evidence="1" type="primary">rpsP</name>
    <name type="ordered locus">Noc_2260</name>
</gene>
<keyword id="KW-1185">Reference proteome</keyword>
<keyword id="KW-0687">Ribonucleoprotein</keyword>
<keyword id="KW-0689">Ribosomal protein</keyword>
<accession>Q3J8X8</accession>
<reference key="1">
    <citation type="journal article" date="2006" name="Appl. Environ. Microbiol.">
        <title>Complete genome sequence of the marine, chemolithoautotrophic, ammonia-oxidizing bacterium Nitrosococcus oceani ATCC 19707.</title>
        <authorList>
            <person name="Klotz M.G."/>
            <person name="Arp D.J."/>
            <person name="Chain P.S.G."/>
            <person name="El-Sheikh A.F."/>
            <person name="Hauser L.J."/>
            <person name="Hommes N.G."/>
            <person name="Larimer F.W."/>
            <person name="Malfatti S.A."/>
            <person name="Norton J.M."/>
            <person name="Poret-Peterson A.T."/>
            <person name="Vergez L.M."/>
            <person name="Ward B.B."/>
        </authorList>
    </citation>
    <scope>NUCLEOTIDE SEQUENCE [LARGE SCALE GENOMIC DNA]</scope>
    <source>
        <strain>ATCC 19707 / BCRC 17464 / JCM 30415 / NCIMB 11848 / C-107</strain>
    </source>
</reference>
<name>RS16_NITOC</name>
<sequence>MVIIRLARGGAKKRPFYSIVVADKRSKRDGRYIEQLGFFNPIAAGGEVPLRIDMERANYWLSQGAQPSERVAQLFKSYSA</sequence>
<proteinExistence type="inferred from homology"/>
<organism>
    <name type="scientific">Nitrosococcus oceani (strain ATCC 19707 / BCRC 17464 / JCM 30415 / NCIMB 11848 / C-107)</name>
    <dbReference type="NCBI Taxonomy" id="323261"/>
    <lineage>
        <taxon>Bacteria</taxon>
        <taxon>Pseudomonadati</taxon>
        <taxon>Pseudomonadota</taxon>
        <taxon>Gammaproteobacteria</taxon>
        <taxon>Chromatiales</taxon>
        <taxon>Chromatiaceae</taxon>
        <taxon>Nitrosococcus</taxon>
    </lineage>
</organism>
<comment type="similarity">
    <text evidence="1">Belongs to the bacterial ribosomal protein bS16 family.</text>
</comment>
<protein>
    <recommendedName>
        <fullName evidence="1">Small ribosomal subunit protein bS16</fullName>
    </recommendedName>
    <alternativeName>
        <fullName evidence="2">30S ribosomal protein S16</fullName>
    </alternativeName>
</protein>